<organism>
    <name type="scientific">Alteromonas mediterranea (strain DSM 17117 / CIP 110805 / LMG 28347 / Deep ecotype)</name>
    <dbReference type="NCBI Taxonomy" id="1774373"/>
    <lineage>
        <taxon>Bacteria</taxon>
        <taxon>Pseudomonadati</taxon>
        <taxon>Pseudomonadota</taxon>
        <taxon>Gammaproteobacteria</taxon>
        <taxon>Alteromonadales</taxon>
        <taxon>Alteromonadaceae</taxon>
        <taxon>Alteromonas/Salinimonas group</taxon>
        <taxon>Alteromonas</taxon>
    </lineage>
</organism>
<reference key="1">
    <citation type="journal article" date="2008" name="ISME J.">
        <title>Comparative genomics of two ecotypes of the marine planktonic copiotroph Alteromonas macleodii suggests alternative lifestyles associated with different kinds of particulate organic matter.</title>
        <authorList>
            <person name="Ivars-Martinez E."/>
            <person name="Martin-Cuadrado A.-B."/>
            <person name="D'Auria G."/>
            <person name="Mira A."/>
            <person name="Ferriera S."/>
            <person name="Johnson J."/>
            <person name="Friedman R."/>
            <person name="Rodriguez-Valera F."/>
        </authorList>
    </citation>
    <scope>NUCLEOTIDE SEQUENCE [LARGE SCALE GENOMIC DNA]</scope>
    <source>
        <strain>DSM 17117 / CIP 110805 / LMG 28347 / Deep ecotype</strain>
    </source>
</reference>
<protein>
    <recommendedName>
        <fullName evidence="1">UPF0761 membrane protein MADE_1017605/MADE_1018330</fullName>
    </recommendedName>
</protein>
<keyword id="KW-0997">Cell inner membrane</keyword>
<keyword id="KW-1003">Cell membrane</keyword>
<keyword id="KW-0472">Membrane</keyword>
<keyword id="KW-0812">Transmembrane</keyword>
<keyword id="KW-1133">Transmembrane helix</keyword>
<feature type="chain" id="PRO_0000391019" description="UPF0761 membrane protein MADE_1017605/MADE_1018330">
    <location>
        <begin position="1"/>
        <end position="294"/>
    </location>
</feature>
<feature type="transmembrane region" description="Helical" evidence="1">
    <location>
        <begin position="45"/>
        <end position="65"/>
    </location>
</feature>
<feature type="transmembrane region" description="Helical" evidence="1">
    <location>
        <begin position="99"/>
        <end position="119"/>
    </location>
</feature>
<feature type="transmembrane region" description="Helical" evidence="1">
    <location>
        <begin position="141"/>
        <end position="161"/>
    </location>
</feature>
<feature type="transmembrane region" description="Helical" evidence="1">
    <location>
        <begin position="182"/>
        <end position="202"/>
    </location>
</feature>
<feature type="transmembrane region" description="Helical" evidence="1">
    <location>
        <begin position="213"/>
        <end position="233"/>
    </location>
</feature>
<feature type="transmembrane region" description="Helical" evidence="1">
    <location>
        <begin position="247"/>
        <end position="267"/>
    </location>
</feature>
<gene>
    <name type="ordered locus">MADE_1017605</name>
</gene>
<gene>
    <name type="ordered locus">MADE_1018330</name>
</gene>
<dbReference type="EMBL" id="CP001103">
    <property type="protein sequence ID" value="AEA99645.1"/>
    <property type="molecule type" value="Genomic_DNA"/>
</dbReference>
<dbReference type="EMBL" id="CP001103">
    <property type="protein sequence ID" value="AEA99790.1"/>
    <property type="molecule type" value="Genomic_DNA"/>
</dbReference>
<dbReference type="RefSeq" id="WP_012519867.1">
    <property type="nucleotide sequence ID" value="NC_011138.3"/>
</dbReference>
<dbReference type="KEGG" id="amc:MADE_1018330"/>
<dbReference type="HOGENOM" id="CLU_032288_0_0_6"/>
<dbReference type="Proteomes" id="UP000001870">
    <property type="component" value="Chromosome"/>
</dbReference>
<dbReference type="GO" id="GO:0005886">
    <property type="term" value="C:plasma membrane"/>
    <property type="evidence" value="ECO:0007669"/>
    <property type="project" value="UniProtKB-SubCell"/>
</dbReference>
<dbReference type="HAMAP" id="MF_00672">
    <property type="entry name" value="UPF0761"/>
    <property type="match status" value="1"/>
</dbReference>
<dbReference type="InterPro" id="IPR023679">
    <property type="entry name" value="UPF0761_bac"/>
</dbReference>
<dbReference type="InterPro" id="IPR017039">
    <property type="entry name" value="Virul_fac_BrkB"/>
</dbReference>
<dbReference type="NCBIfam" id="NF002457">
    <property type="entry name" value="PRK01637.1"/>
    <property type="match status" value="1"/>
</dbReference>
<dbReference type="NCBIfam" id="TIGR00765">
    <property type="entry name" value="yihY_not_rbn"/>
    <property type="match status" value="1"/>
</dbReference>
<dbReference type="PANTHER" id="PTHR30213">
    <property type="entry name" value="INNER MEMBRANE PROTEIN YHJD"/>
    <property type="match status" value="1"/>
</dbReference>
<dbReference type="PANTHER" id="PTHR30213:SF0">
    <property type="entry name" value="UPF0761 MEMBRANE PROTEIN YIHY"/>
    <property type="match status" value="1"/>
</dbReference>
<dbReference type="Pfam" id="PF03631">
    <property type="entry name" value="Virul_fac_BrkB"/>
    <property type="match status" value="1"/>
</dbReference>
<dbReference type="PIRSF" id="PIRSF035875">
    <property type="entry name" value="RNase_BN"/>
    <property type="match status" value="1"/>
</dbReference>
<comment type="subcellular location">
    <subcellularLocation>
        <location evidence="1">Cell inner membrane</location>
        <topology evidence="1">Multi-pass membrane protein</topology>
    </subcellularLocation>
</comment>
<comment type="similarity">
    <text evidence="1">Belongs to the UPF0761 family.</text>
</comment>
<accession>B4RYA6</accession>
<accession>F2G6A6</accession>
<proteinExistence type="inferred from homology"/>
<sequence>MDLDKVKTFYNNVAPQLRDLFGIFIKRCKEDNITISAGHLAYVTLLSLVPFIMVTFTIMSAFPAFASVRSKLEHFVFSNFVPTASDVVHKYMTDFVGNASQMSAIGILSLLVVALMLISNVDKTLNRIWRTQSDRPIVYTFAIYWMVITLGPMLIGSSVVVSSYLTGLAAFTEEYTPGLGTFLLSLVPSGAALLAFAILYMVVPNRRVYARHAFVGAIVATIAFEITKSGFALYVTNFPSYELIYGALAVVPILFLWVYLSWIIVLFGAEFTCSLGEAFENKKAEHAPRKVPKE</sequence>
<evidence type="ECO:0000255" key="1">
    <source>
        <dbReference type="HAMAP-Rule" id="MF_00672"/>
    </source>
</evidence>
<name>Y3526_ALTMD</name>